<sequence>MMSRLNSVVIKLWLTIILIVTTVLILLSIALITFMQYYFTQETENAIREDARRISSLVEQSHNKEEAIKYSQTLIENPGGLMIINNKHRQSTASLSNIKKQMLNEVVNNDHFDDVFDKGKSVTRNVTIKEKGSSQTYILLGYPTKAQKNSHSKYSGVFIYKDLKSIEDTNNAITIITIITAVIFLTITTVFAFFLSSRITKPLRRLRDQATRVSEGDYSYKPSVTTKDEIGQLSQAFNQMSTEIEEHVDALSTSKNIRDSLINSMVEGVLGINESRQIILSNKMANDIMDNIDEDAKAFLLRQIEDTFKSKQTEMRDLEMNTRFFVVTTSYIDKIEQGGKSGVVVTVRDMTNEHNLDQMKKDFIANVSHELRTPISLLQGYTESIVDGIVTEPDEIKESLAIVLDESKRLNRLVNELLNVARMDAEGLSVNKEVQPIAALLDKMKIKYRQQADDLGLNMTFNYCKKRVWTYDMDRMDQVLTNLIDNASRYTKPGDEIAITCDENESEDILYIKDTGTGIAPEHLQQVFDRFYKVDAARTRGKQGTGLGLFICKMIIEEHGGSIDVKSELGKGTTFIIKLPKPE</sequence>
<name>SRRB_STAAR</name>
<protein>
    <recommendedName>
        <fullName>Sensor protein SrrB</fullName>
        <ecNumber>2.7.13.3</ecNumber>
    </recommendedName>
    <alternativeName>
        <fullName>Staphylococcal respiratory response protein B</fullName>
    </alternativeName>
</protein>
<evidence type="ECO:0000250" key="1"/>
<evidence type="ECO:0000250" key="2">
    <source>
        <dbReference type="UniProtKB" id="Q5HFT1"/>
    </source>
</evidence>
<evidence type="ECO:0000255" key="3"/>
<evidence type="ECO:0000255" key="4">
    <source>
        <dbReference type="PROSITE-ProRule" id="PRU00102"/>
    </source>
</evidence>
<evidence type="ECO:0000255" key="5">
    <source>
        <dbReference type="PROSITE-ProRule" id="PRU00107"/>
    </source>
</evidence>
<evidence type="ECO:0000305" key="6"/>
<accession>Q6GGK7</accession>
<reference key="1">
    <citation type="journal article" date="2004" name="Proc. Natl. Acad. Sci. U.S.A.">
        <title>Complete genomes of two clinical Staphylococcus aureus strains: evidence for the rapid evolution of virulence and drug resistance.</title>
        <authorList>
            <person name="Holden M.T.G."/>
            <person name="Feil E.J."/>
            <person name="Lindsay J.A."/>
            <person name="Peacock S.J."/>
            <person name="Day N.P.J."/>
            <person name="Enright M.C."/>
            <person name="Foster T.J."/>
            <person name="Moore C.E."/>
            <person name="Hurst L."/>
            <person name="Atkin R."/>
            <person name="Barron A."/>
            <person name="Bason N."/>
            <person name="Bentley S.D."/>
            <person name="Chillingworth C."/>
            <person name="Chillingworth T."/>
            <person name="Churcher C."/>
            <person name="Clark L."/>
            <person name="Corton C."/>
            <person name="Cronin A."/>
            <person name="Doggett J."/>
            <person name="Dowd L."/>
            <person name="Feltwell T."/>
            <person name="Hance Z."/>
            <person name="Harris B."/>
            <person name="Hauser H."/>
            <person name="Holroyd S."/>
            <person name="Jagels K."/>
            <person name="James K.D."/>
            <person name="Lennard N."/>
            <person name="Line A."/>
            <person name="Mayes R."/>
            <person name="Moule S."/>
            <person name="Mungall K."/>
            <person name="Ormond D."/>
            <person name="Quail M.A."/>
            <person name="Rabbinowitsch E."/>
            <person name="Rutherford K.M."/>
            <person name="Sanders M."/>
            <person name="Sharp S."/>
            <person name="Simmonds M."/>
            <person name="Stevens K."/>
            <person name="Whitehead S."/>
            <person name="Barrell B.G."/>
            <person name="Spratt B.G."/>
            <person name="Parkhill J."/>
        </authorList>
    </citation>
    <scope>NUCLEOTIDE SEQUENCE [LARGE SCALE GENOMIC DNA]</scope>
    <source>
        <strain>MRSA252</strain>
    </source>
</reference>
<dbReference type="EC" id="2.7.13.3"/>
<dbReference type="EMBL" id="BX571856">
    <property type="protein sequence ID" value="CAG40563.1"/>
    <property type="status" value="ALT_INIT"/>
    <property type="molecule type" value="Genomic_DNA"/>
</dbReference>
<dbReference type="RefSeq" id="WP_000987777.1">
    <property type="nucleotide sequence ID" value="NC_002952.2"/>
</dbReference>
<dbReference type="SMR" id="Q6GGK7"/>
<dbReference type="KEGG" id="sar:SAR1567"/>
<dbReference type="HOGENOM" id="CLU_000445_89_2_9"/>
<dbReference type="Proteomes" id="UP000000596">
    <property type="component" value="Chromosome"/>
</dbReference>
<dbReference type="GO" id="GO:0005886">
    <property type="term" value="C:plasma membrane"/>
    <property type="evidence" value="ECO:0007669"/>
    <property type="project" value="UniProtKB-SubCell"/>
</dbReference>
<dbReference type="GO" id="GO:0005524">
    <property type="term" value="F:ATP binding"/>
    <property type="evidence" value="ECO:0007669"/>
    <property type="project" value="UniProtKB-KW"/>
</dbReference>
<dbReference type="GO" id="GO:0000156">
    <property type="term" value="F:phosphorelay response regulator activity"/>
    <property type="evidence" value="ECO:0007669"/>
    <property type="project" value="TreeGrafter"/>
</dbReference>
<dbReference type="GO" id="GO:0000155">
    <property type="term" value="F:phosphorelay sensor kinase activity"/>
    <property type="evidence" value="ECO:0007669"/>
    <property type="project" value="InterPro"/>
</dbReference>
<dbReference type="GO" id="GO:0030295">
    <property type="term" value="F:protein kinase activator activity"/>
    <property type="evidence" value="ECO:0007669"/>
    <property type="project" value="TreeGrafter"/>
</dbReference>
<dbReference type="GO" id="GO:0007234">
    <property type="term" value="P:osmosensory signaling via phosphorelay pathway"/>
    <property type="evidence" value="ECO:0007669"/>
    <property type="project" value="TreeGrafter"/>
</dbReference>
<dbReference type="CDD" id="cd06225">
    <property type="entry name" value="HAMP"/>
    <property type="match status" value="1"/>
</dbReference>
<dbReference type="CDD" id="cd00075">
    <property type="entry name" value="HATPase"/>
    <property type="match status" value="1"/>
</dbReference>
<dbReference type="CDD" id="cd00082">
    <property type="entry name" value="HisKA"/>
    <property type="match status" value="1"/>
</dbReference>
<dbReference type="FunFam" id="3.30.565.10:FF:000006">
    <property type="entry name" value="Sensor histidine kinase WalK"/>
    <property type="match status" value="1"/>
</dbReference>
<dbReference type="FunFam" id="1.10.287.130:FF:000001">
    <property type="entry name" value="Two-component sensor histidine kinase"/>
    <property type="match status" value="1"/>
</dbReference>
<dbReference type="Gene3D" id="1.10.287.130">
    <property type="match status" value="1"/>
</dbReference>
<dbReference type="Gene3D" id="6.10.340.10">
    <property type="match status" value="1"/>
</dbReference>
<dbReference type="Gene3D" id="3.30.565.10">
    <property type="entry name" value="Histidine kinase-like ATPase, C-terminal domain"/>
    <property type="match status" value="1"/>
</dbReference>
<dbReference type="InterPro" id="IPR003660">
    <property type="entry name" value="HAMP_dom"/>
</dbReference>
<dbReference type="InterPro" id="IPR036890">
    <property type="entry name" value="HATPase_C_sf"/>
</dbReference>
<dbReference type="InterPro" id="IPR005467">
    <property type="entry name" value="His_kinase_dom"/>
</dbReference>
<dbReference type="InterPro" id="IPR003661">
    <property type="entry name" value="HisK_dim/P_dom"/>
</dbReference>
<dbReference type="InterPro" id="IPR036097">
    <property type="entry name" value="HisK_dim/P_sf"/>
</dbReference>
<dbReference type="InterPro" id="IPR041328">
    <property type="entry name" value="HisK_sensor"/>
</dbReference>
<dbReference type="InterPro" id="IPR052545">
    <property type="entry name" value="Light-responsive_reg"/>
</dbReference>
<dbReference type="InterPro" id="IPR004358">
    <property type="entry name" value="Sig_transdc_His_kin-like_C"/>
</dbReference>
<dbReference type="PANTHER" id="PTHR42878:SF3">
    <property type="entry name" value="HISTIDINE PROTEIN KINASE SAES"/>
    <property type="match status" value="1"/>
</dbReference>
<dbReference type="PANTHER" id="PTHR42878">
    <property type="entry name" value="TWO-COMPONENT HISTIDINE KINASE"/>
    <property type="match status" value="1"/>
</dbReference>
<dbReference type="Pfam" id="PF00672">
    <property type="entry name" value="HAMP"/>
    <property type="match status" value="1"/>
</dbReference>
<dbReference type="Pfam" id="PF02518">
    <property type="entry name" value="HATPase_c"/>
    <property type="match status" value="1"/>
</dbReference>
<dbReference type="Pfam" id="PF18698">
    <property type="entry name" value="HisK_sensor"/>
    <property type="match status" value="1"/>
</dbReference>
<dbReference type="Pfam" id="PF00512">
    <property type="entry name" value="HisKA"/>
    <property type="match status" value="1"/>
</dbReference>
<dbReference type="PRINTS" id="PR00344">
    <property type="entry name" value="BCTRLSENSOR"/>
</dbReference>
<dbReference type="SMART" id="SM00304">
    <property type="entry name" value="HAMP"/>
    <property type="match status" value="1"/>
</dbReference>
<dbReference type="SMART" id="SM00387">
    <property type="entry name" value="HATPase_c"/>
    <property type="match status" value="1"/>
</dbReference>
<dbReference type="SMART" id="SM00388">
    <property type="entry name" value="HisKA"/>
    <property type="match status" value="1"/>
</dbReference>
<dbReference type="SUPFAM" id="SSF55874">
    <property type="entry name" value="ATPase domain of HSP90 chaperone/DNA topoisomerase II/histidine kinase"/>
    <property type="match status" value="1"/>
</dbReference>
<dbReference type="SUPFAM" id="SSF158472">
    <property type="entry name" value="HAMP domain-like"/>
    <property type="match status" value="1"/>
</dbReference>
<dbReference type="SUPFAM" id="SSF47384">
    <property type="entry name" value="Homodimeric domain of signal transducing histidine kinase"/>
    <property type="match status" value="1"/>
</dbReference>
<dbReference type="PROSITE" id="PS50885">
    <property type="entry name" value="HAMP"/>
    <property type="match status" value="1"/>
</dbReference>
<dbReference type="PROSITE" id="PS50109">
    <property type="entry name" value="HIS_KIN"/>
    <property type="match status" value="1"/>
</dbReference>
<comment type="function">
    <text evidence="2">Member of the two-component regulatory system SrrA/SrrB, which is involved in the global regulation of staphylococcal virulence factors in response to environmental oxygen levels as well as biofilm formation. Also plays an essential role in host-derived nitric oxide resistance by regulating hmp/flavohemoglobin, an enzyme that detoxifies nitric oxide by converting it to nitrate. Functions as a sensor protein kinase which is autophosphorylated at a histidine residue and transfers its phosphate group to SrrA. In turn, SrrA binds to the upstream promoter regions of the target genes to positively and negatively regulate their expression.</text>
</comment>
<comment type="catalytic activity">
    <reaction>
        <text>ATP + protein L-histidine = ADP + protein N-phospho-L-histidine.</text>
        <dbReference type="EC" id="2.7.13.3"/>
    </reaction>
</comment>
<comment type="subcellular location">
    <subcellularLocation>
        <location evidence="1">Cell membrane</location>
        <topology evidence="1">Multi-pass membrane protein</topology>
    </subcellularLocation>
</comment>
<comment type="sequence caution" evidence="6">
    <conflict type="erroneous initiation">
        <sequence resource="EMBL-CDS" id="CAG40563"/>
    </conflict>
</comment>
<keyword id="KW-0067">ATP-binding</keyword>
<keyword id="KW-1003">Cell membrane</keyword>
<keyword id="KW-0418">Kinase</keyword>
<keyword id="KW-0472">Membrane</keyword>
<keyword id="KW-0547">Nucleotide-binding</keyword>
<keyword id="KW-0597">Phosphoprotein</keyword>
<keyword id="KW-0808">Transferase</keyword>
<keyword id="KW-0812">Transmembrane</keyword>
<keyword id="KW-1133">Transmembrane helix</keyword>
<keyword id="KW-0902">Two-component regulatory system</keyword>
<gene>
    <name type="primary">srrB</name>
    <name type="ordered locus">SAR1567</name>
</gene>
<proteinExistence type="inferred from homology"/>
<organism>
    <name type="scientific">Staphylococcus aureus (strain MRSA252)</name>
    <dbReference type="NCBI Taxonomy" id="282458"/>
    <lineage>
        <taxon>Bacteria</taxon>
        <taxon>Bacillati</taxon>
        <taxon>Bacillota</taxon>
        <taxon>Bacilli</taxon>
        <taxon>Bacillales</taxon>
        <taxon>Staphylococcaceae</taxon>
        <taxon>Staphylococcus</taxon>
    </lineage>
</organism>
<feature type="chain" id="PRO_0000074885" description="Sensor protein SrrB">
    <location>
        <begin position="1"/>
        <end position="583"/>
    </location>
</feature>
<feature type="topological domain" description="Cytoplasmic" evidence="3">
    <location>
        <begin position="1"/>
        <end position="11"/>
    </location>
</feature>
<feature type="transmembrane region" description="Helical" evidence="3">
    <location>
        <begin position="12"/>
        <end position="32"/>
    </location>
</feature>
<feature type="topological domain" description="Extracellular" evidence="3">
    <location>
        <begin position="33"/>
        <end position="174"/>
    </location>
</feature>
<feature type="transmembrane region" description="Helical" evidence="3">
    <location>
        <begin position="175"/>
        <end position="195"/>
    </location>
</feature>
<feature type="topological domain" description="Cytoplasmic" evidence="3">
    <location>
        <begin position="196"/>
        <end position="583"/>
    </location>
</feature>
<feature type="domain" description="HAMP" evidence="4">
    <location>
        <begin position="197"/>
        <end position="249"/>
    </location>
</feature>
<feature type="domain" description="Histidine kinase" evidence="5">
    <location>
        <begin position="366"/>
        <end position="583"/>
    </location>
</feature>
<feature type="modified residue" description="Phosphohistidine; by autocatalysis" evidence="5">
    <location>
        <position position="369"/>
    </location>
</feature>